<protein>
    <recommendedName>
        <fullName evidence="3">Nucleoside diphosphate kinase</fullName>
        <shortName evidence="3">NDK</shortName>
        <shortName evidence="3">NDP kinase</shortName>
        <ecNumber evidence="3">2.7.4.6</ecNumber>
    </recommendedName>
    <alternativeName>
        <fullName evidence="3">Nucleoside-2-P kinase</fullName>
    </alternativeName>
</protein>
<evidence type="ECO:0000250" key="1">
    <source>
        <dbReference type="UniProtKB" id="Q9KNM4"/>
    </source>
</evidence>
<evidence type="ECO:0000250" key="2">
    <source>
        <dbReference type="UniProtKB" id="Q9KTX4"/>
    </source>
</evidence>
<evidence type="ECO:0000255" key="3">
    <source>
        <dbReference type="HAMAP-Rule" id="MF_00451"/>
    </source>
</evidence>
<evidence type="ECO:0007829" key="4">
    <source>
        <dbReference type="PDB" id="5X00"/>
    </source>
</evidence>
<organism>
    <name type="scientific">Vibrio cholerae serotype O1 (strain M66-2)</name>
    <dbReference type="NCBI Taxonomy" id="579112"/>
    <lineage>
        <taxon>Bacteria</taxon>
        <taxon>Pseudomonadati</taxon>
        <taxon>Pseudomonadota</taxon>
        <taxon>Gammaproteobacteria</taxon>
        <taxon>Vibrionales</taxon>
        <taxon>Vibrionaceae</taxon>
        <taxon>Vibrio</taxon>
    </lineage>
</organism>
<name>NDK_VIBCM</name>
<accession>C3LT09</accession>
<reference key="1">
    <citation type="journal article" date="2008" name="PLoS ONE">
        <title>A recalibrated molecular clock and independent origins for the cholera pandemic clones.</title>
        <authorList>
            <person name="Feng L."/>
            <person name="Reeves P.R."/>
            <person name="Lan R."/>
            <person name="Ren Y."/>
            <person name="Gao C."/>
            <person name="Zhou Z."/>
            <person name="Ren Y."/>
            <person name="Cheng J."/>
            <person name="Wang W."/>
            <person name="Wang J."/>
            <person name="Qian W."/>
            <person name="Li D."/>
            <person name="Wang L."/>
        </authorList>
    </citation>
    <scope>NUCLEOTIDE SEQUENCE [LARGE SCALE GENOMIC DNA]</scope>
    <source>
        <strain>M66-2</strain>
    </source>
</reference>
<dbReference type="EC" id="2.7.4.6" evidence="3"/>
<dbReference type="EMBL" id="CP001233">
    <property type="protein sequence ID" value="ACP05035.1"/>
    <property type="molecule type" value="Genomic_DNA"/>
</dbReference>
<dbReference type="RefSeq" id="WP_001162850.1">
    <property type="nucleotide sequence ID" value="NC_012578.1"/>
</dbReference>
<dbReference type="PDB" id="5X00">
    <property type="method" value="X-ray"/>
    <property type="resolution" value="3.06 A"/>
    <property type="chains" value="A/B=1-142"/>
</dbReference>
<dbReference type="PDBsum" id="5X00"/>
<dbReference type="SMR" id="C3LT09"/>
<dbReference type="GeneID" id="94014474"/>
<dbReference type="KEGG" id="vcm:VCM66_0714"/>
<dbReference type="HOGENOM" id="CLU_060216_8_1_6"/>
<dbReference type="BRENDA" id="2.7.4.6">
    <property type="organism ID" value="6626"/>
</dbReference>
<dbReference type="Proteomes" id="UP000001217">
    <property type="component" value="Chromosome I"/>
</dbReference>
<dbReference type="GO" id="GO:0005737">
    <property type="term" value="C:cytoplasm"/>
    <property type="evidence" value="ECO:0007669"/>
    <property type="project" value="UniProtKB-SubCell"/>
</dbReference>
<dbReference type="GO" id="GO:0005524">
    <property type="term" value="F:ATP binding"/>
    <property type="evidence" value="ECO:0007669"/>
    <property type="project" value="UniProtKB-UniRule"/>
</dbReference>
<dbReference type="GO" id="GO:0046872">
    <property type="term" value="F:metal ion binding"/>
    <property type="evidence" value="ECO:0007669"/>
    <property type="project" value="UniProtKB-KW"/>
</dbReference>
<dbReference type="GO" id="GO:0004550">
    <property type="term" value="F:nucleoside diphosphate kinase activity"/>
    <property type="evidence" value="ECO:0007669"/>
    <property type="project" value="UniProtKB-UniRule"/>
</dbReference>
<dbReference type="GO" id="GO:0006241">
    <property type="term" value="P:CTP biosynthetic process"/>
    <property type="evidence" value="ECO:0007669"/>
    <property type="project" value="UniProtKB-UniRule"/>
</dbReference>
<dbReference type="GO" id="GO:0006183">
    <property type="term" value="P:GTP biosynthetic process"/>
    <property type="evidence" value="ECO:0007669"/>
    <property type="project" value="UniProtKB-UniRule"/>
</dbReference>
<dbReference type="GO" id="GO:0006228">
    <property type="term" value="P:UTP biosynthetic process"/>
    <property type="evidence" value="ECO:0007669"/>
    <property type="project" value="UniProtKB-UniRule"/>
</dbReference>
<dbReference type="CDD" id="cd04413">
    <property type="entry name" value="NDPk_I"/>
    <property type="match status" value="1"/>
</dbReference>
<dbReference type="FunFam" id="3.30.70.141:FF:000001">
    <property type="entry name" value="Nucleoside diphosphate kinase"/>
    <property type="match status" value="1"/>
</dbReference>
<dbReference type="Gene3D" id="3.30.70.141">
    <property type="entry name" value="Nucleoside diphosphate kinase-like domain"/>
    <property type="match status" value="1"/>
</dbReference>
<dbReference type="HAMAP" id="MF_00451">
    <property type="entry name" value="NDP_kinase"/>
    <property type="match status" value="1"/>
</dbReference>
<dbReference type="InterPro" id="IPR034907">
    <property type="entry name" value="NDK-like_dom"/>
</dbReference>
<dbReference type="InterPro" id="IPR036850">
    <property type="entry name" value="NDK-like_dom_sf"/>
</dbReference>
<dbReference type="InterPro" id="IPR001564">
    <property type="entry name" value="Nucleoside_diP_kinase"/>
</dbReference>
<dbReference type="InterPro" id="IPR023005">
    <property type="entry name" value="Nucleoside_diP_kinase_AS"/>
</dbReference>
<dbReference type="NCBIfam" id="NF001908">
    <property type="entry name" value="PRK00668.1"/>
    <property type="match status" value="1"/>
</dbReference>
<dbReference type="PANTHER" id="PTHR46161">
    <property type="entry name" value="NUCLEOSIDE DIPHOSPHATE KINASE"/>
    <property type="match status" value="1"/>
</dbReference>
<dbReference type="PANTHER" id="PTHR46161:SF3">
    <property type="entry name" value="NUCLEOSIDE DIPHOSPHATE KINASE DDB_G0292928-RELATED"/>
    <property type="match status" value="1"/>
</dbReference>
<dbReference type="Pfam" id="PF00334">
    <property type="entry name" value="NDK"/>
    <property type="match status" value="1"/>
</dbReference>
<dbReference type="PRINTS" id="PR01243">
    <property type="entry name" value="NUCDPKINASE"/>
</dbReference>
<dbReference type="SMART" id="SM00562">
    <property type="entry name" value="NDK"/>
    <property type="match status" value="1"/>
</dbReference>
<dbReference type="SUPFAM" id="SSF54919">
    <property type="entry name" value="Nucleoside diphosphate kinase, NDK"/>
    <property type="match status" value="1"/>
</dbReference>
<dbReference type="PROSITE" id="PS00469">
    <property type="entry name" value="NDPK"/>
    <property type="match status" value="1"/>
</dbReference>
<dbReference type="PROSITE" id="PS51374">
    <property type="entry name" value="NDPK_LIKE"/>
    <property type="match status" value="1"/>
</dbReference>
<comment type="function">
    <text evidence="3">Major role in the synthesis of nucleoside triphosphates other than ATP. The ATP gamma phosphate is transferred to the NDP beta phosphate via a ping-pong mechanism, using a phosphorylated active-site intermediate.</text>
</comment>
<comment type="function">
    <text evidence="1">(Microbial infection) Catalyzes the phosphorylation of dZDP to dZTP, when the bacterium is infected by a phage that produces the substrate for the synthesis of dZTP (2- amino-2'-deoxyadenosine 5'-triphosphate), which is then used by the phage as a DNA polymerase substrate.</text>
</comment>
<comment type="catalytic activity">
    <reaction evidence="2">
        <text>dZDP + ATP = dZTP + ADP</text>
        <dbReference type="Rhea" id="RHEA:67644"/>
        <dbReference type="ChEBI" id="CHEBI:30616"/>
        <dbReference type="ChEBI" id="CHEBI:172929"/>
        <dbReference type="ChEBI" id="CHEBI:172931"/>
        <dbReference type="ChEBI" id="CHEBI:456216"/>
    </reaction>
</comment>
<comment type="catalytic activity">
    <reaction evidence="3">
        <text>a 2'-deoxyribonucleoside 5'-diphosphate + ATP = a 2'-deoxyribonucleoside 5'-triphosphate + ADP</text>
        <dbReference type="Rhea" id="RHEA:44640"/>
        <dbReference type="ChEBI" id="CHEBI:30616"/>
        <dbReference type="ChEBI" id="CHEBI:61560"/>
        <dbReference type="ChEBI" id="CHEBI:73316"/>
        <dbReference type="ChEBI" id="CHEBI:456216"/>
        <dbReference type="EC" id="2.7.4.6"/>
    </reaction>
</comment>
<comment type="catalytic activity">
    <reaction evidence="3">
        <text>a ribonucleoside 5'-diphosphate + ATP = a ribonucleoside 5'-triphosphate + ADP</text>
        <dbReference type="Rhea" id="RHEA:18113"/>
        <dbReference type="ChEBI" id="CHEBI:30616"/>
        <dbReference type="ChEBI" id="CHEBI:57930"/>
        <dbReference type="ChEBI" id="CHEBI:61557"/>
        <dbReference type="ChEBI" id="CHEBI:456216"/>
        <dbReference type="EC" id="2.7.4.6"/>
    </reaction>
</comment>
<comment type="cofactor">
    <cofactor evidence="3">
        <name>Mg(2+)</name>
        <dbReference type="ChEBI" id="CHEBI:18420"/>
    </cofactor>
</comment>
<comment type="pathway">
    <text evidence="2">Purine metabolism.</text>
</comment>
<comment type="subunit">
    <text evidence="3">Homotetramer.</text>
</comment>
<comment type="subcellular location">
    <subcellularLocation>
        <location evidence="3">Cytoplasm</location>
    </subcellularLocation>
</comment>
<comment type="similarity">
    <text evidence="3">Belongs to the NDK family.</text>
</comment>
<proteinExistence type="evidence at protein level"/>
<keyword id="KW-0002">3D-structure</keyword>
<keyword id="KW-0067">ATP-binding</keyword>
<keyword id="KW-0963">Cytoplasm</keyword>
<keyword id="KW-0418">Kinase</keyword>
<keyword id="KW-0460">Magnesium</keyword>
<keyword id="KW-0479">Metal-binding</keyword>
<keyword id="KW-0546">Nucleotide metabolism</keyword>
<keyword id="KW-0547">Nucleotide-binding</keyword>
<keyword id="KW-0597">Phosphoprotein</keyword>
<keyword id="KW-0808">Transferase</keyword>
<gene>
    <name evidence="3" type="primary">ndk</name>
    <name type="ordered locus">VCM66_0714</name>
</gene>
<sequence length="142" mass="15925">MALERTFSIIKPDAVKRNLIGEIYHRIEKAGLQIIAAKMVHLSEEQASGFYAEHEGKPFFEPLKEFMTSGPIMVQVLEGENAIARYRELMGKTNPEEAACGTLRADYALSMRYNSVHGSDSPASAAREIEFFFPESEICPRP</sequence>
<feature type="chain" id="PRO_1000192300" description="Nucleoside diphosphate kinase">
    <location>
        <begin position="1"/>
        <end position="142"/>
    </location>
</feature>
<feature type="active site" description="Pros-phosphohistidine intermediate" evidence="3">
    <location>
        <position position="117"/>
    </location>
</feature>
<feature type="binding site" evidence="3">
    <location>
        <position position="11"/>
    </location>
    <ligand>
        <name>ATP</name>
        <dbReference type="ChEBI" id="CHEBI:30616"/>
    </ligand>
</feature>
<feature type="binding site" evidence="3">
    <location>
        <position position="59"/>
    </location>
    <ligand>
        <name>ATP</name>
        <dbReference type="ChEBI" id="CHEBI:30616"/>
    </ligand>
</feature>
<feature type="binding site" evidence="3">
    <location>
        <position position="87"/>
    </location>
    <ligand>
        <name>ATP</name>
        <dbReference type="ChEBI" id="CHEBI:30616"/>
    </ligand>
</feature>
<feature type="binding site" evidence="3">
    <location>
        <position position="93"/>
    </location>
    <ligand>
        <name>ATP</name>
        <dbReference type="ChEBI" id="CHEBI:30616"/>
    </ligand>
</feature>
<feature type="binding site" evidence="3">
    <location>
        <position position="104"/>
    </location>
    <ligand>
        <name>ATP</name>
        <dbReference type="ChEBI" id="CHEBI:30616"/>
    </ligand>
</feature>
<feature type="binding site" evidence="3">
    <location>
        <position position="114"/>
    </location>
    <ligand>
        <name>ATP</name>
        <dbReference type="ChEBI" id="CHEBI:30616"/>
    </ligand>
</feature>
<feature type="strand" evidence="4">
    <location>
        <begin position="3"/>
        <end position="10"/>
    </location>
</feature>
<feature type="helix" evidence="4">
    <location>
        <begin position="12"/>
        <end position="16"/>
    </location>
</feature>
<feature type="helix" evidence="4">
    <location>
        <begin position="20"/>
        <end position="28"/>
    </location>
</feature>
<feature type="turn" evidence="4">
    <location>
        <begin position="29"/>
        <end position="31"/>
    </location>
</feature>
<feature type="strand" evidence="4">
    <location>
        <begin position="33"/>
        <end position="40"/>
    </location>
</feature>
<feature type="helix" evidence="4">
    <location>
        <begin position="44"/>
        <end position="50"/>
    </location>
</feature>
<feature type="helix" evidence="4">
    <location>
        <begin position="52"/>
        <end position="54"/>
    </location>
</feature>
<feature type="strand" evidence="4">
    <location>
        <begin position="55"/>
        <end position="57"/>
    </location>
</feature>
<feature type="helix" evidence="4">
    <location>
        <begin position="60"/>
        <end position="66"/>
    </location>
</feature>
<feature type="strand" evidence="4">
    <location>
        <begin position="72"/>
        <end position="80"/>
    </location>
</feature>
<feature type="helix" evidence="4">
    <location>
        <begin position="82"/>
        <end position="89"/>
    </location>
</feature>
<feature type="strand" evidence="4">
    <location>
        <begin position="115"/>
        <end position="118"/>
    </location>
</feature>
<feature type="helix" evidence="4">
    <location>
        <begin position="122"/>
        <end position="132"/>
    </location>
</feature>
<feature type="helix" evidence="4">
    <location>
        <begin position="135"/>
        <end position="137"/>
    </location>
</feature>